<proteinExistence type="evidence at protein level"/>
<dbReference type="EC" id="3.4.19.12" evidence="12"/>
<dbReference type="EMBL" id="AY177200">
    <property type="protein sequence ID" value="AAO27702.1"/>
    <property type="molecule type" value="mRNA"/>
</dbReference>
<dbReference type="EMBL" id="AF161381">
    <property type="protein sequence ID" value="AAF28941.1"/>
    <property type="status" value="ALT_INIT"/>
    <property type="molecule type" value="mRNA"/>
</dbReference>
<dbReference type="EMBL" id="AK000120">
    <property type="protein sequence ID" value="BAA90956.1"/>
    <property type="molecule type" value="mRNA"/>
</dbReference>
<dbReference type="EMBL" id="AP000721">
    <property type="status" value="NOT_ANNOTATED_CDS"/>
    <property type="molecule type" value="Genomic_DNA"/>
</dbReference>
<dbReference type="EMBL" id="BC007519">
    <property type="protein sequence ID" value="AAH07519.1"/>
    <property type="molecule type" value="mRNA"/>
</dbReference>
<dbReference type="EMBL" id="BC010368">
    <property type="protein sequence ID" value="AAH10368.1"/>
    <property type="molecule type" value="mRNA"/>
</dbReference>
<dbReference type="EMBL" id="BC107701">
    <property type="protein sequence ID" value="AAI07702.1"/>
    <property type="molecule type" value="mRNA"/>
</dbReference>
<dbReference type="CCDS" id="CCDS8055.1">
    <molecule id="Q96FW1-1"/>
</dbReference>
<dbReference type="RefSeq" id="NP_060140.2">
    <molecule id="Q96FW1-1"/>
    <property type="nucleotide sequence ID" value="NM_017670.3"/>
</dbReference>
<dbReference type="PDB" id="2ZFY">
    <property type="method" value="X-ray"/>
    <property type="resolution" value="1.69 A"/>
    <property type="chains" value="A=40-271"/>
</dbReference>
<dbReference type="PDB" id="3VON">
    <property type="method" value="X-ray"/>
    <property type="resolution" value="3.15 A"/>
    <property type="chains" value="A/H/O/V/c/j=45-271"/>
</dbReference>
<dbReference type="PDB" id="4DDG">
    <property type="method" value="X-ray"/>
    <property type="resolution" value="3.30 A"/>
    <property type="chains" value="A/B/C/J/K/L=25-271"/>
</dbReference>
<dbReference type="PDB" id="4DDI">
    <property type="method" value="X-ray"/>
    <property type="resolution" value="3.80 A"/>
    <property type="chains" value="A/B/C=25-271"/>
</dbReference>
<dbReference type="PDB" id="4DHZ">
    <property type="method" value="X-ray"/>
    <property type="resolution" value="3.11 A"/>
    <property type="chains" value="A=1-45"/>
</dbReference>
<dbReference type="PDB" id="4I6L">
    <property type="method" value="X-ray"/>
    <property type="resolution" value="2.49 A"/>
    <property type="chains" value="A=45-271"/>
</dbReference>
<dbReference type="PDB" id="4LDT">
    <property type="method" value="X-ray"/>
    <property type="resolution" value="1.90 A"/>
    <property type="chains" value="A=1-45"/>
</dbReference>
<dbReference type="PDBsum" id="2ZFY"/>
<dbReference type="PDBsum" id="3VON"/>
<dbReference type="PDBsum" id="4DDG"/>
<dbReference type="PDBsum" id="4DDI"/>
<dbReference type="PDBsum" id="4DHZ"/>
<dbReference type="PDBsum" id="4I6L"/>
<dbReference type="PDBsum" id="4LDT"/>
<dbReference type="SMR" id="Q96FW1"/>
<dbReference type="BioGRID" id="120751">
    <property type="interactions" value="354"/>
</dbReference>
<dbReference type="CORUM" id="Q96FW1"/>
<dbReference type="DIP" id="DIP-41158N"/>
<dbReference type="FunCoup" id="Q96FW1">
    <property type="interactions" value="4051"/>
</dbReference>
<dbReference type="IntAct" id="Q96FW1">
    <property type="interactions" value="385"/>
</dbReference>
<dbReference type="MINT" id="Q96FW1"/>
<dbReference type="STRING" id="9606.ENSP00000444357"/>
<dbReference type="BindingDB" id="Q96FW1"/>
<dbReference type="ChEMBL" id="CHEMBL4523428"/>
<dbReference type="GuidetoPHARMACOLOGY" id="3208"/>
<dbReference type="MEROPS" id="C65.001"/>
<dbReference type="GlyGen" id="Q96FW1">
    <property type="glycosylation" value="1 site, 1 O-linked glycan (1 site)"/>
</dbReference>
<dbReference type="iPTMnet" id="Q96FW1"/>
<dbReference type="MetOSite" id="Q96FW1"/>
<dbReference type="PhosphoSitePlus" id="Q96FW1"/>
<dbReference type="SwissPalm" id="Q96FW1"/>
<dbReference type="BioMuta" id="OTUB1"/>
<dbReference type="DMDM" id="44888286"/>
<dbReference type="CPTAC" id="CPTAC-244"/>
<dbReference type="CPTAC" id="CPTAC-245"/>
<dbReference type="jPOST" id="Q96FW1"/>
<dbReference type="MassIVE" id="Q96FW1"/>
<dbReference type="PaxDb" id="9606-ENSP00000444357"/>
<dbReference type="PeptideAtlas" id="Q96FW1"/>
<dbReference type="ProteomicsDB" id="76566">
    <molecule id="Q96FW1-1"/>
</dbReference>
<dbReference type="ProteomicsDB" id="76567">
    <molecule id="Q96FW1-2"/>
</dbReference>
<dbReference type="Pumba" id="Q96FW1"/>
<dbReference type="Antibodypedia" id="29104">
    <property type="antibodies" value="497 antibodies from 34 providers"/>
</dbReference>
<dbReference type="CPTC" id="Q96FW1">
    <property type="antibodies" value="3 antibodies"/>
</dbReference>
<dbReference type="DNASU" id="55611"/>
<dbReference type="Ensembl" id="ENST00000428192.6">
    <molecule id="Q96FW1-1"/>
    <property type="protein sequence ID" value="ENSP00000402551.2"/>
    <property type="gene ID" value="ENSG00000167770.13"/>
</dbReference>
<dbReference type="Ensembl" id="ENST00000538426.6">
    <molecule id="Q96FW1-1"/>
    <property type="protein sequence ID" value="ENSP00000444357.1"/>
    <property type="gene ID" value="ENSG00000167770.13"/>
</dbReference>
<dbReference type="GeneID" id="55611"/>
<dbReference type="KEGG" id="hsa:55611"/>
<dbReference type="MANE-Select" id="ENST00000538426.6">
    <property type="protein sequence ID" value="ENSP00000444357.1"/>
    <property type="RefSeq nucleotide sequence ID" value="NM_017670.3"/>
    <property type="RefSeq protein sequence ID" value="NP_060140.2"/>
</dbReference>
<dbReference type="UCSC" id="uc001nyf.2">
    <molecule id="Q96FW1-1"/>
    <property type="organism name" value="human"/>
</dbReference>
<dbReference type="AGR" id="HGNC:23077"/>
<dbReference type="CTD" id="55611"/>
<dbReference type="DisGeNET" id="55611"/>
<dbReference type="GeneCards" id="OTUB1"/>
<dbReference type="HGNC" id="HGNC:23077">
    <property type="gene designation" value="OTUB1"/>
</dbReference>
<dbReference type="HPA" id="ENSG00000167770">
    <property type="expression patterns" value="Low tissue specificity"/>
</dbReference>
<dbReference type="MIM" id="608337">
    <property type="type" value="gene"/>
</dbReference>
<dbReference type="neXtProt" id="NX_Q96FW1"/>
<dbReference type="OpenTargets" id="ENSG00000167770"/>
<dbReference type="PharmGKB" id="PA134988141"/>
<dbReference type="VEuPathDB" id="HostDB:ENSG00000167770"/>
<dbReference type="eggNOG" id="KOG3991">
    <property type="taxonomic scope" value="Eukaryota"/>
</dbReference>
<dbReference type="GeneTree" id="ENSGT00390000006979"/>
<dbReference type="InParanoid" id="Q96FW1"/>
<dbReference type="OrthoDB" id="18915at2759"/>
<dbReference type="PAN-GO" id="Q96FW1">
    <property type="GO annotations" value="6 GO annotations based on evolutionary models"/>
</dbReference>
<dbReference type="PhylomeDB" id="Q96FW1"/>
<dbReference type="TreeFam" id="TF314145"/>
<dbReference type="PathwayCommons" id="Q96FW1"/>
<dbReference type="Reactome" id="R-HSA-5689880">
    <property type="pathway name" value="Ub-specific processing proteases"/>
</dbReference>
<dbReference type="Reactome" id="R-HSA-5689896">
    <property type="pathway name" value="Ovarian tumor domain proteases"/>
</dbReference>
<dbReference type="SignaLink" id="Q96FW1"/>
<dbReference type="SIGNOR" id="Q96FW1"/>
<dbReference type="BioGRID-ORCS" id="55611">
    <property type="hits" value="53 hits in 1170 CRISPR screens"/>
</dbReference>
<dbReference type="ChiTaRS" id="OTUB1">
    <property type="organism name" value="human"/>
</dbReference>
<dbReference type="EvolutionaryTrace" id="Q96FW1"/>
<dbReference type="GeneWiki" id="OTUB1"/>
<dbReference type="GenomeRNAi" id="55611"/>
<dbReference type="Pharos" id="Q96FW1">
    <property type="development level" value="Tbio"/>
</dbReference>
<dbReference type="PRO" id="PR:Q96FW1"/>
<dbReference type="Proteomes" id="UP000005640">
    <property type="component" value="Chromosome 11"/>
</dbReference>
<dbReference type="RNAct" id="Q96FW1">
    <property type="molecule type" value="protein"/>
</dbReference>
<dbReference type="Bgee" id="ENSG00000167770">
    <property type="expression patterns" value="Expressed in right frontal lobe and 212 other cell types or tissues"/>
</dbReference>
<dbReference type="ExpressionAtlas" id="Q96FW1">
    <property type="expression patterns" value="baseline and differential"/>
</dbReference>
<dbReference type="GO" id="GO:0005829">
    <property type="term" value="C:cytosol"/>
    <property type="evidence" value="ECO:0000304"/>
    <property type="project" value="Reactome"/>
</dbReference>
<dbReference type="GO" id="GO:0070062">
    <property type="term" value="C:extracellular exosome"/>
    <property type="evidence" value="ECO:0007005"/>
    <property type="project" value="UniProtKB"/>
</dbReference>
<dbReference type="GO" id="GO:0005654">
    <property type="term" value="C:nucleoplasm"/>
    <property type="evidence" value="ECO:0000304"/>
    <property type="project" value="Reactome"/>
</dbReference>
<dbReference type="GO" id="GO:0004843">
    <property type="term" value="F:cysteine-type deubiquitinase activity"/>
    <property type="evidence" value="ECO:0000314"/>
    <property type="project" value="UniProtKB"/>
</dbReference>
<dbReference type="GO" id="GO:0019784">
    <property type="term" value="F:deNEDDylase activity"/>
    <property type="evidence" value="ECO:0000314"/>
    <property type="project" value="UniProtKB"/>
</dbReference>
<dbReference type="GO" id="GO:0043130">
    <property type="term" value="F:ubiquitin binding"/>
    <property type="evidence" value="ECO:0000314"/>
    <property type="project" value="UniProtKB"/>
</dbReference>
<dbReference type="GO" id="GO:0031625">
    <property type="term" value="F:ubiquitin protein ligase binding"/>
    <property type="evidence" value="ECO:0000353"/>
    <property type="project" value="UniProtKB"/>
</dbReference>
<dbReference type="GO" id="GO:0055105">
    <property type="term" value="F:ubiquitin-protein transferase inhibitor activity"/>
    <property type="evidence" value="ECO:0000314"/>
    <property type="project" value="UniProtKB"/>
</dbReference>
<dbReference type="GO" id="GO:0002250">
    <property type="term" value="P:adaptive immune response"/>
    <property type="evidence" value="ECO:0007669"/>
    <property type="project" value="UniProtKB-KW"/>
</dbReference>
<dbReference type="GO" id="GO:0006974">
    <property type="term" value="P:DNA damage response"/>
    <property type="evidence" value="ECO:0000314"/>
    <property type="project" value="UniProtKB"/>
</dbReference>
<dbReference type="GO" id="GO:0006281">
    <property type="term" value="P:DNA repair"/>
    <property type="evidence" value="ECO:0007669"/>
    <property type="project" value="UniProtKB-KW"/>
</dbReference>
<dbReference type="GO" id="GO:2000780">
    <property type="term" value="P:negative regulation of double-strand break repair"/>
    <property type="evidence" value="ECO:0000315"/>
    <property type="project" value="UniProtKB"/>
</dbReference>
<dbReference type="GO" id="GO:1904263">
    <property type="term" value="P:positive regulation of TORC1 signaling"/>
    <property type="evidence" value="ECO:0000314"/>
    <property type="project" value="UniProtKB"/>
</dbReference>
<dbReference type="GO" id="GO:0016579">
    <property type="term" value="P:protein deubiquitination"/>
    <property type="evidence" value="ECO:0000314"/>
    <property type="project" value="UniProtKB"/>
</dbReference>
<dbReference type="GO" id="GO:0071108">
    <property type="term" value="P:protein K48-linked deubiquitination"/>
    <property type="evidence" value="ECO:0000314"/>
    <property type="project" value="UniProtKB"/>
</dbReference>
<dbReference type="GO" id="GO:0006508">
    <property type="term" value="P:proteolysis"/>
    <property type="evidence" value="ECO:0007669"/>
    <property type="project" value="UniProtKB-KW"/>
</dbReference>
<dbReference type="CDD" id="cd22763">
    <property type="entry name" value="OTUB1"/>
    <property type="match status" value="1"/>
</dbReference>
<dbReference type="FunFam" id="1.20.1300.20:FF:000001">
    <property type="entry name" value="Ubiquitin thioesterase OTUB1"/>
    <property type="match status" value="1"/>
</dbReference>
<dbReference type="FunFam" id="3.30.200.60:FF:000003">
    <property type="entry name" value="Ubiquitin thioesterase OTUB1"/>
    <property type="match status" value="1"/>
</dbReference>
<dbReference type="Gene3D" id="3.30.200.60">
    <property type="entry name" value="Peptidase C65 Otubain, subdomain 1"/>
    <property type="match status" value="1"/>
</dbReference>
<dbReference type="Gene3D" id="1.20.1300.20">
    <property type="entry name" value="Peptidase C65 Otubain, subdomain 2"/>
    <property type="match status" value="1"/>
</dbReference>
<dbReference type="InterPro" id="IPR003323">
    <property type="entry name" value="OTU_dom"/>
</dbReference>
<dbReference type="InterPro" id="IPR016615">
    <property type="entry name" value="Otubain"/>
</dbReference>
<dbReference type="InterPro" id="IPR038765">
    <property type="entry name" value="Papain-like_cys_pep_sf"/>
</dbReference>
<dbReference type="InterPro" id="IPR019400">
    <property type="entry name" value="Peptidase_C65_otubain"/>
</dbReference>
<dbReference type="InterPro" id="IPR042468">
    <property type="entry name" value="Peptidase_C65_otubain_sub1"/>
</dbReference>
<dbReference type="InterPro" id="IPR042467">
    <property type="entry name" value="Peptidase_C65_otubain_sub2"/>
</dbReference>
<dbReference type="PANTHER" id="PTHR12931:SF19">
    <property type="entry name" value="UBIQUITIN THIOESTERASE OTUB1"/>
    <property type="match status" value="1"/>
</dbReference>
<dbReference type="PANTHER" id="PTHR12931">
    <property type="entry name" value="UBIQUITIN THIOLESTERASE PROTEIN OTUB"/>
    <property type="match status" value="1"/>
</dbReference>
<dbReference type="Pfam" id="PF10275">
    <property type="entry name" value="Peptidase_C65"/>
    <property type="match status" value="1"/>
</dbReference>
<dbReference type="PIRSF" id="PIRSF013503">
    <property type="entry name" value="Ubiquitin_thioesterase_Otubain"/>
    <property type="match status" value="1"/>
</dbReference>
<dbReference type="SUPFAM" id="SSF54001">
    <property type="entry name" value="Cysteine proteinases"/>
    <property type="match status" value="1"/>
</dbReference>
<dbReference type="PROSITE" id="PS50802">
    <property type="entry name" value="OTU"/>
    <property type="match status" value="1"/>
</dbReference>
<protein>
    <recommendedName>
        <fullName>Ubiquitin thioesterase OTUB1</fullName>
        <ecNumber evidence="12">3.4.19.12</ecNumber>
    </recommendedName>
    <alternativeName>
        <fullName>Deubiquitinating enzyme OTUB1</fullName>
    </alternativeName>
    <alternativeName>
        <fullName>OTU domain-containing ubiquitin aldehyde-binding protein 1</fullName>
    </alternativeName>
    <alternativeName>
        <fullName>Otubain-1</fullName>
        <shortName>hOTU1</shortName>
    </alternativeName>
    <alternativeName>
        <fullName>Ubiquitin-specific-processing protease OTUB1</fullName>
    </alternativeName>
</protein>
<feature type="initiator methionine" description="Removed" evidence="20 21">
    <location>
        <position position="1"/>
    </location>
</feature>
<feature type="chain" id="PRO_0000221008" description="Ubiquitin thioesterase OTUB1">
    <location>
        <begin position="2"/>
        <end position="271"/>
    </location>
</feature>
<feature type="domain" description="OTU" evidence="2">
    <location>
        <begin position="80"/>
        <end position="271"/>
    </location>
</feature>
<feature type="region of interest" description="Ubiquitin-conjugating enzyme E2 binding" evidence="10">
    <location>
        <begin position="130"/>
        <end position="138"/>
    </location>
</feature>
<feature type="region of interest" description="Ubiquitin-conjugating enzyme E2 binding" evidence="10">
    <location>
        <begin position="169"/>
        <end position="177"/>
    </location>
</feature>
<feature type="region of interest" description="Free ubiquitin binding" evidence="10 11 18">
    <location>
        <begin position="189"/>
        <end position="195"/>
    </location>
</feature>
<feature type="region of interest" description="Ubiquitin-conjugating enzyme E2 binding" evidence="10 11 18">
    <location>
        <begin position="206"/>
        <end position="213"/>
    </location>
</feature>
<feature type="region of interest" description="Free ubiquitin binding" evidence="10 11 18">
    <location>
        <begin position="214"/>
        <end position="221"/>
    </location>
</feature>
<feature type="region of interest" description="Free ubiquitin binding" evidence="10 11 18">
    <location>
        <begin position="245"/>
        <end position="251"/>
    </location>
</feature>
<feature type="active site" evidence="11 18">
    <location>
        <position position="88"/>
    </location>
</feature>
<feature type="active site" description="Nucleophile" evidence="10 17">
    <location>
        <position position="91"/>
    </location>
</feature>
<feature type="active site" evidence="10 17">
    <location>
        <position position="265"/>
    </location>
</feature>
<feature type="site" description="Required for proximal ubiquitin-binding" evidence="7">
    <location>
        <position position="23"/>
    </location>
</feature>
<feature type="site" description="Interacts with free ubiquitin" evidence="10">
    <location>
        <position position="221"/>
    </location>
</feature>
<feature type="site" description="Interacts with free ubiquitin" evidence="10">
    <location>
        <position position="235"/>
    </location>
</feature>
<feature type="site" description="Interacts with free ubiquitin" evidence="10">
    <location>
        <position position="237"/>
    </location>
</feature>
<feature type="site" description="Interacts with free ubiquitin" evidence="10">
    <location>
        <position position="261"/>
    </location>
</feature>
<feature type="site" description="Interacts with free ubiquitin" evidence="10 11 18">
    <location>
        <position position="266"/>
    </location>
</feature>
<feature type="modified residue" description="N-acetylalanine" evidence="20 21">
    <location>
        <position position="2"/>
    </location>
</feature>
<feature type="modified residue" description="Phosphoserine" evidence="19">
    <location>
        <position position="16"/>
    </location>
</feature>
<feature type="modified residue" description="Phosphotyrosine; by SRC" evidence="14">
    <location>
        <position position="26"/>
    </location>
</feature>
<feature type="splice variant" id="VSP_009464" description="In isoform 2." evidence="15">
    <original>MAAEEPQQQKQEPLGSDSEGVNCLAYDEAIMAQQDRIQQEIAVQNPLVSERLELSVLYKEYAEDDNIYQQKIKDLHKKYSYIRKTRPDGNCFYRAFGFSHLEALLDDSKELQ</original>
    <variation>MMKPSWLSRTEFSKRLLCRTLWCQSGWSSRSYTRSMLKMTTSINRRSRTSTKSTRTSARPGLTATVSIGLSDSPTWRHCWMTARSCSGEKGGHWAPRQVGVYLLPGRVGCVSSRVSPSFPGDGLDSGLARRGSAVSALASGLVEEPMLGPPFHPTP</variation>
    <location>
        <begin position="1"/>
        <end position="112"/>
    </location>
</feature>
<feature type="mutagenesis site" description="Abolishes only ubiquitin-vinylsulfone adduct formation." evidence="7">
    <original>C</original>
    <variation>A</variation>
    <location>
        <position position="23"/>
    </location>
</feature>
<feature type="mutagenesis site" description="Does not affect ability to deubiquitinate DEPTOR." evidence="13">
    <original>C</original>
    <variation>S</variation>
    <location>
        <position position="23"/>
    </location>
</feature>
<feature type="mutagenesis site" description="Abolished ability to deubiquitinate RPTOR." evidence="14">
    <original>Y</original>
    <variation>A</variation>
    <location>
        <position position="26"/>
    </location>
</feature>
<feature type="mutagenesis site" description="Impairs inhibition of UBE2N/UBC13." evidence="10">
    <original>Q</original>
    <variation>R</variation>
    <location>
        <position position="33"/>
    </location>
</feature>
<feature type="mutagenesis site" description="Impairs inhibition of UBE2N/UBC13." evidence="10">
    <original>I</original>
    <variation>T</variation>
    <location>
        <position position="37"/>
    </location>
</feature>
<feature type="mutagenesis site" description="Does not affect activity in DNA repair and ability to inhibit UBE2N/UBC13." evidence="10">
    <original>Q</original>
    <variation>L</variation>
    <location>
        <position position="39"/>
    </location>
</feature>
<feature type="mutagenesis site" description="Slightly improves ability to cleave 'K63'-linked ubiquitin." evidence="6">
    <original>P</original>
    <variation>G</variation>
    <location>
        <position position="87"/>
    </location>
</feature>
<feature type="mutagenesis site" description="Abolished ability to deubiquitinate DEPTOR. Does not affect ability to deubiquitinate RPTOR; when associated with A-91 and A-265." evidence="13 14">
    <original>D</original>
    <variation>A</variation>
    <location>
        <position position="88"/>
    </location>
</feature>
<feature type="mutagenesis site" description="Abolishes hydrolase activity in vitro. Abolishes ability to inhibit RNF168; when associated with S-91 and A-265." evidence="4 9">
    <original>D</original>
    <variation>E</variation>
    <location>
        <position position="88"/>
    </location>
</feature>
<feature type="mutagenesis site" description="Prevents RNF128 autoubiquitination, and stabilizes RNF128 in vivo. Abolishes both ubiquitin-binding and adduct formation with ubiquitin-vinylsulfone. Does not affect ability to deubiquitinate RPTOR; when associated with A-88 and A-265." evidence="4 5 6 7 8 9 10 14">
    <original>C</original>
    <variation>A</variation>
    <location>
        <position position="91"/>
    </location>
</feature>
<feature type="mutagenesis site" description="Abolishes hydrolase activity in vitro. Does not affect ability to inhibit RNF168. Does not affect ability to deubiquitinate DEPTOR. Abolishes ability to inhibit RNF168; when associated with E-88 and A-265." evidence="4 5 6 7 8 9 10 13">
    <original>C</original>
    <variation>S</variation>
    <location>
        <position position="91"/>
    </location>
</feature>
<feature type="mutagenesis site" description="Does not affect ability to inhibit UBE2N/UBC13." evidence="10">
    <original>A</original>
    <variation>T</variation>
    <location>
        <position position="116"/>
    </location>
</feature>
<feature type="mutagenesis site" description="Impairs inhibition of UBE2N/UBC13." evidence="10">
    <original>T</original>
    <variation>R</variation>
    <location>
        <position position="134"/>
    </location>
</feature>
<feature type="mutagenesis site" description="Impairs inhibition of UBE2N/UBC13." evidence="10">
    <original>D</original>
    <variation>G</variation>
    <location>
        <position position="137"/>
    </location>
</feature>
<feature type="mutagenesis site" description="No effect on RNF128." evidence="5">
    <original>R</original>
    <variation>L</variation>
    <location>
        <position position="176"/>
    </location>
</feature>
<feature type="mutagenesis site" description="Fails to inhibit ubiquitin conjugation by UBE2N/UBC13." evidence="10">
    <original>F</original>
    <variation>S</variation>
    <location>
        <position position="190"/>
    </location>
</feature>
<feature type="mutagenesis site" description="No effect on RNF128." evidence="5 7">
    <original>C</original>
    <variation>A</variation>
    <location>
        <position position="212"/>
    </location>
</feature>
<feature type="mutagenesis site" description="Impairs inhibition of UBE2N/UBC13." evidence="10">
    <original>Y</original>
    <variation>H</variation>
    <location>
        <position position="261"/>
    </location>
</feature>
<feature type="mutagenesis site" description="Fails to inhibit ubiquitin conjugation by UBE2N/UBC13." evidence="10">
    <original>P</original>
    <variation>L</variation>
    <location>
        <position position="263"/>
    </location>
</feature>
<feature type="mutagenesis site" description="Abolishes ability to inhibit RNF168; when associated with A-88 and S-91. Does not affect ability to deubiquitinate RPTOR; when associated with A-88 and A-91." evidence="4 9 14">
    <original>H</original>
    <variation>A</variation>
    <location>
        <position position="265"/>
    </location>
</feature>
<feature type="mutagenesis site" description="Abolishes hydrolase activity in vitro." evidence="4 9">
    <original>H</original>
    <variation>R</variation>
    <location>
        <position position="265"/>
    </location>
</feature>
<feature type="sequence conflict" description="In Ref. 6; AAH10368." evidence="16" ref="6">
    <original>Y</original>
    <variation>C</variation>
    <location>
        <position position="61"/>
    </location>
</feature>
<feature type="sequence conflict" description="In Ref. 4; BAA90956." evidence="16" ref="4">
    <original>K</original>
    <variation>R</variation>
    <location>
        <position position="151"/>
    </location>
</feature>
<feature type="helix" evidence="25">
    <location>
        <begin position="24"/>
        <end position="44"/>
    </location>
</feature>
<feature type="strand" evidence="24">
    <location>
        <begin position="47"/>
        <end position="53"/>
    </location>
</feature>
<feature type="helix" evidence="22">
    <location>
        <begin position="54"/>
        <end position="60"/>
    </location>
</feature>
<feature type="helix" evidence="22">
    <location>
        <begin position="66"/>
        <end position="75"/>
    </location>
</feature>
<feature type="turn" evidence="22">
    <location>
        <begin position="76"/>
        <end position="78"/>
    </location>
</feature>
<feature type="strand" evidence="22">
    <location>
        <begin position="81"/>
        <end position="83"/>
    </location>
</feature>
<feature type="strand" evidence="24">
    <location>
        <begin position="87"/>
        <end position="89"/>
    </location>
</feature>
<feature type="helix" evidence="22">
    <location>
        <begin position="91"/>
        <end position="104"/>
    </location>
</feature>
<feature type="helix" evidence="22">
    <location>
        <begin position="108"/>
        <end position="127"/>
    </location>
</feature>
<feature type="helix" evidence="22">
    <location>
        <begin position="132"/>
        <end position="150"/>
    </location>
</feature>
<feature type="helix" evidence="22">
    <location>
        <begin position="155"/>
        <end position="162"/>
    </location>
</feature>
<feature type="helix" evidence="22">
    <location>
        <begin position="165"/>
        <end position="185"/>
    </location>
</feature>
<feature type="helix" evidence="22">
    <location>
        <begin position="187"/>
        <end position="190"/>
    </location>
</feature>
<feature type="helix" evidence="22">
    <location>
        <begin position="191"/>
        <end position="193"/>
    </location>
</feature>
<feature type="strand" evidence="23">
    <location>
        <begin position="194"/>
        <end position="197"/>
    </location>
</feature>
<feature type="helix" evidence="22">
    <location>
        <begin position="200"/>
        <end position="207"/>
    </location>
</feature>
<feature type="helix" evidence="22">
    <location>
        <begin position="217"/>
        <end position="227"/>
    </location>
</feature>
<feature type="strand" evidence="22">
    <location>
        <begin position="231"/>
        <end position="235"/>
    </location>
</feature>
<feature type="strand" evidence="23">
    <location>
        <begin position="240"/>
        <end position="242"/>
    </location>
</feature>
<feature type="strand" evidence="22">
    <location>
        <begin position="245"/>
        <end position="250"/>
    </location>
</feature>
<feature type="strand" evidence="22">
    <location>
        <begin position="256"/>
        <end position="262"/>
    </location>
</feature>
<feature type="strand" evidence="22">
    <location>
        <begin position="265"/>
        <end position="270"/>
    </location>
</feature>
<sequence>MAAEEPQQQKQEPLGSDSEGVNCLAYDEAIMAQQDRIQQEIAVQNPLVSERLELSVLYKEYAEDDNIYQQKIKDLHKKYSYIRKTRPDGNCFYRAFGFSHLEALLDDSKELQRFKAVSAKSKEDLVSQGFTEFTIEDFHNTFMDLIEQVEKQTSVADLLASFNDQSTSDYLVVYLRLLTSGYLQRESKFFEHFIEGGRTVKEFCQQEVEPMCKESDHIHIIALAQALSVSIQVEYMDRGEGGTTNPHIFPEGSEPKVYLLYRPGHYDILYK</sequence>
<accession>Q96FW1</accession>
<accession>Q32Q78</accession>
<accession>Q96II3</accession>
<accession>Q9NXQ4</accession>
<accession>Q9P0B8</accession>
<reference key="1">
    <citation type="journal article" date="2003" name="EMBO Rep.">
        <title>Otubains: a new family of cysteine proteases in the ubiquitin pathway.</title>
        <authorList>
            <person name="Balakirev M.Y."/>
            <person name="Tcherniuk S.O."/>
            <person name="Jaquinod M."/>
            <person name="Chroboczek J."/>
        </authorList>
    </citation>
    <scope>NUCLEOTIDE SEQUENCE [MRNA] (ISOFORM 1)</scope>
    <scope>IDENTIFICATION BY MASS SPECTROMETRY</scope>
    <scope>FUNCTION</scope>
    <scope>TISSUE SPECIFICITY</scope>
    <scope>MUTAGENESIS OF ASP-88; CYS-91 AND HIS-265</scope>
    <source>
        <tissue>Cervix carcinoma</tissue>
    </source>
</reference>
<reference key="2">
    <citation type="journal article" date="2004" name="Nat. Immunol.">
        <title>Two isoforms of otubain 1 regulate T cell anergy via GRAIL.</title>
        <authorList>
            <person name="Soares L."/>
            <person name="Seroogy C."/>
            <person name="Skrenta H."/>
            <person name="Anandasabapathy N."/>
            <person name="Lovelace P."/>
            <person name="Chung C.D."/>
            <person name="Engleman E."/>
            <person name="Fathman C.G."/>
        </authorList>
    </citation>
    <scope>NUCLEOTIDE SEQUENCE [MRNA] (ISOFORMS 1 AND 2)</scope>
    <scope>ALTERNATIVE SPLICING</scope>
    <scope>FUNCTION</scope>
    <scope>TISSUE SPECIFICITY</scope>
    <scope>INTERACTION WITH RNF128 AND USP8</scope>
    <scope>MUTAGENESIS OF CYS-91; ARG-176 AND CYS-212</scope>
</reference>
<reference key="3">
    <citation type="journal article" date="2000" name="Genome Res.">
        <title>Cloning and functional analysis of cDNAs with open reading frames for 300 previously undefined genes expressed in CD34+ hematopoietic stem/progenitor cells.</title>
        <authorList>
            <person name="Zhang Q.-H."/>
            <person name="Ye M."/>
            <person name="Wu X.-Y."/>
            <person name="Ren S.-X."/>
            <person name="Zhao M."/>
            <person name="Zhao C.-J."/>
            <person name="Fu G."/>
            <person name="Shen Y."/>
            <person name="Fan H.-Y."/>
            <person name="Lu G."/>
            <person name="Zhong M."/>
            <person name="Xu X.-R."/>
            <person name="Han Z.-G."/>
            <person name="Zhang J.-W."/>
            <person name="Tao J."/>
            <person name="Huang Q.-H."/>
            <person name="Zhou J."/>
            <person name="Hu G.-X."/>
            <person name="Gu J."/>
            <person name="Chen S.-J."/>
            <person name="Chen Z."/>
        </authorList>
    </citation>
    <scope>NUCLEOTIDE SEQUENCE [LARGE SCALE MRNA] (ISOFORM 1)</scope>
    <source>
        <tissue>Umbilical cord blood</tissue>
    </source>
</reference>
<reference key="4">
    <citation type="journal article" date="2004" name="Nat. Genet.">
        <title>Complete sequencing and characterization of 21,243 full-length human cDNAs.</title>
        <authorList>
            <person name="Ota T."/>
            <person name="Suzuki Y."/>
            <person name="Nishikawa T."/>
            <person name="Otsuki T."/>
            <person name="Sugiyama T."/>
            <person name="Irie R."/>
            <person name="Wakamatsu A."/>
            <person name="Hayashi K."/>
            <person name="Sato H."/>
            <person name="Nagai K."/>
            <person name="Kimura K."/>
            <person name="Makita H."/>
            <person name="Sekine M."/>
            <person name="Obayashi M."/>
            <person name="Nishi T."/>
            <person name="Shibahara T."/>
            <person name="Tanaka T."/>
            <person name="Ishii S."/>
            <person name="Yamamoto J."/>
            <person name="Saito K."/>
            <person name="Kawai Y."/>
            <person name="Isono Y."/>
            <person name="Nakamura Y."/>
            <person name="Nagahari K."/>
            <person name="Murakami K."/>
            <person name="Yasuda T."/>
            <person name="Iwayanagi T."/>
            <person name="Wagatsuma M."/>
            <person name="Shiratori A."/>
            <person name="Sudo H."/>
            <person name="Hosoiri T."/>
            <person name="Kaku Y."/>
            <person name="Kodaira H."/>
            <person name="Kondo H."/>
            <person name="Sugawara M."/>
            <person name="Takahashi M."/>
            <person name="Kanda K."/>
            <person name="Yokoi T."/>
            <person name="Furuya T."/>
            <person name="Kikkawa E."/>
            <person name="Omura Y."/>
            <person name="Abe K."/>
            <person name="Kamihara K."/>
            <person name="Katsuta N."/>
            <person name="Sato K."/>
            <person name="Tanikawa M."/>
            <person name="Yamazaki M."/>
            <person name="Ninomiya K."/>
            <person name="Ishibashi T."/>
            <person name="Yamashita H."/>
            <person name="Murakawa K."/>
            <person name="Fujimori K."/>
            <person name="Tanai H."/>
            <person name="Kimata M."/>
            <person name="Watanabe M."/>
            <person name="Hiraoka S."/>
            <person name="Chiba Y."/>
            <person name="Ishida S."/>
            <person name="Ono Y."/>
            <person name="Takiguchi S."/>
            <person name="Watanabe S."/>
            <person name="Yosida M."/>
            <person name="Hotuta T."/>
            <person name="Kusano J."/>
            <person name="Kanehori K."/>
            <person name="Takahashi-Fujii A."/>
            <person name="Hara H."/>
            <person name="Tanase T.-O."/>
            <person name="Nomura Y."/>
            <person name="Togiya S."/>
            <person name="Komai F."/>
            <person name="Hara R."/>
            <person name="Takeuchi K."/>
            <person name="Arita M."/>
            <person name="Imose N."/>
            <person name="Musashino K."/>
            <person name="Yuuki H."/>
            <person name="Oshima A."/>
            <person name="Sasaki N."/>
            <person name="Aotsuka S."/>
            <person name="Yoshikawa Y."/>
            <person name="Matsunawa H."/>
            <person name="Ichihara T."/>
            <person name="Shiohata N."/>
            <person name="Sano S."/>
            <person name="Moriya S."/>
            <person name="Momiyama H."/>
            <person name="Satoh N."/>
            <person name="Takami S."/>
            <person name="Terashima Y."/>
            <person name="Suzuki O."/>
            <person name="Nakagawa S."/>
            <person name="Senoh A."/>
            <person name="Mizoguchi H."/>
            <person name="Goto Y."/>
            <person name="Shimizu F."/>
            <person name="Wakebe H."/>
            <person name="Hishigaki H."/>
            <person name="Watanabe T."/>
            <person name="Sugiyama A."/>
            <person name="Takemoto M."/>
            <person name="Kawakami B."/>
            <person name="Yamazaki M."/>
            <person name="Watanabe K."/>
            <person name="Kumagai A."/>
            <person name="Itakura S."/>
            <person name="Fukuzumi Y."/>
            <person name="Fujimori Y."/>
            <person name="Komiyama M."/>
            <person name="Tashiro H."/>
            <person name="Tanigami A."/>
            <person name="Fujiwara T."/>
            <person name="Ono T."/>
            <person name="Yamada K."/>
            <person name="Fujii Y."/>
            <person name="Ozaki K."/>
            <person name="Hirao M."/>
            <person name="Ohmori Y."/>
            <person name="Kawabata A."/>
            <person name="Hikiji T."/>
            <person name="Kobatake N."/>
            <person name="Inagaki H."/>
            <person name="Ikema Y."/>
            <person name="Okamoto S."/>
            <person name="Okitani R."/>
            <person name="Kawakami T."/>
            <person name="Noguchi S."/>
            <person name="Itoh T."/>
            <person name="Shigeta K."/>
            <person name="Senba T."/>
            <person name="Matsumura K."/>
            <person name="Nakajima Y."/>
            <person name="Mizuno T."/>
            <person name="Morinaga M."/>
            <person name="Sasaki M."/>
            <person name="Togashi T."/>
            <person name="Oyama M."/>
            <person name="Hata H."/>
            <person name="Watanabe M."/>
            <person name="Komatsu T."/>
            <person name="Mizushima-Sugano J."/>
            <person name="Satoh T."/>
            <person name="Shirai Y."/>
            <person name="Takahashi Y."/>
            <person name="Nakagawa K."/>
            <person name="Okumura K."/>
            <person name="Nagase T."/>
            <person name="Nomura N."/>
            <person name="Kikuchi H."/>
            <person name="Masuho Y."/>
            <person name="Yamashita R."/>
            <person name="Nakai K."/>
            <person name="Yada T."/>
            <person name="Nakamura Y."/>
            <person name="Ohara O."/>
            <person name="Isogai T."/>
            <person name="Sugano S."/>
        </authorList>
    </citation>
    <scope>NUCLEOTIDE SEQUENCE [LARGE SCALE MRNA] (ISOFORM 1)</scope>
    <source>
        <tissue>Colon</tissue>
    </source>
</reference>
<reference key="5">
    <citation type="journal article" date="2006" name="Nature">
        <title>Human chromosome 11 DNA sequence and analysis including novel gene identification.</title>
        <authorList>
            <person name="Taylor T.D."/>
            <person name="Noguchi H."/>
            <person name="Totoki Y."/>
            <person name="Toyoda A."/>
            <person name="Kuroki Y."/>
            <person name="Dewar K."/>
            <person name="Lloyd C."/>
            <person name="Itoh T."/>
            <person name="Takeda T."/>
            <person name="Kim D.-W."/>
            <person name="She X."/>
            <person name="Barlow K.F."/>
            <person name="Bloom T."/>
            <person name="Bruford E."/>
            <person name="Chang J.L."/>
            <person name="Cuomo C.A."/>
            <person name="Eichler E."/>
            <person name="FitzGerald M.G."/>
            <person name="Jaffe D.B."/>
            <person name="LaButti K."/>
            <person name="Nicol R."/>
            <person name="Park H.-S."/>
            <person name="Seaman C."/>
            <person name="Sougnez C."/>
            <person name="Yang X."/>
            <person name="Zimmer A.R."/>
            <person name="Zody M.C."/>
            <person name="Birren B.W."/>
            <person name="Nusbaum C."/>
            <person name="Fujiyama A."/>
            <person name="Hattori M."/>
            <person name="Rogers J."/>
            <person name="Lander E.S."/>
            <person name="Sakaki Y."/>
        </authorList>
    </citation>
    <scope>NUCLEOTIDE SEQUENCE [LARGE SCALE GENOMIC DNA]</scope>
</reference>
<reference key="6">
    <citation type="journal article" date="2004" name="Genome Res.">
        <title>The status, quality, and expansion of the NIH full-length cDNA project: the Mammalian Gene Collection (MGC).</title>
        <authorList>
            <consortium name="The MGC Project Team"/>
        </authorList>
    </citation>
    <scope>NUCLEOTIDE SEQUENCE [LARGE SCALE MRNA] (ISOFORM 1)</scope>
    <source>
        <tissue>Colon</tissue>
        <tissue>Skin</tissue>
    </source>
</reference>
<reference key="7">
    <citation type="journal article" date="2002" name="Chem. Biol.">
        <title>Chemistry-based functional proteomics reveals novel members of the deubiquitinating enzyme family.</title>
        <authorList>
            <person name="Borodovsky A."/>
            <person name="Ovaa H."/>
            <person name="Kolli N."/>
            <person name="Gan-Erdene T."/>
            <person name="Wilkinson K.D."/>
            <person name="Ploegh H.L."/>
            <person name="Kessler B.M."/>
        </authorList>
    </citation>
    <scope>PARTIAL PROTEIN SEQUENCE</scope>
    <scope>FUNCTION</scope>
</reference>
<reference key="8">
    <citation type="journal article" date="2008" name="Proc. Natl. Acad. Sci. U.S.A.">
        <title>A quantitative atlas of mitotic phosphorylation.</title>
        <authorList>
            <person name="Dephoure N."/>
            <person name="Zhou C."/>
            <person name="Villen J."/>
            <person name="Beausoleil S.A."/>
            <person name="Bakalarski C.E."/>
            <person name="Elledge S.J."/>
            <person name="Gygi S.P."/>
        </authorList>
    </citation>
    <scope>PHOSPHORYLATION [LARGE SCALE ANALYSIS] AT SER-16</scope>
    <scope>IDENTIFICATION BY MASS SPECTROMETRY [LARGE SCALE ANALYSIS]</scope>
    <source>
        <tissue>Cervix carcinoma</tissue>
    </source>
</reference>
<reference key="9">
    <citation type="journal article" date="2009" name="Anal. Chem.">
        <title>Lys-N and trypsin cover complementary parts of the phosphoproteome in a refined SCX-based approach.</title>
        <authorList>
            <person name="Gauci S."/>
            <person name="Helbig A.O."/>
            <person name="Slijper M."/>
            <person name="Krijgsveld J."/>
            <person name="Heck A.J."/>
            <person name="Mohammed S."/>
        </authorList>
    </citation>
    <scope>ACETYLATION [LARGE SCALE ANALYSIS] AT ALA-2</scope>
    <scope>CLEAVAGE OF INITIATOR METHIONINE [LARGE SCALE ANALYSIS]</scope>
    <scope>IDENTIFICATION BY MASS SPECTROMETRY [LARGE SCALE ANALYSIS]</scope>
</reference>
<reference key="10">
    <citation type="journal article" date="2009" name="J. Biol. Chem.">
        <title>OTU Domain-containing ubiquitin aldehyde-binding protein 1 (OTUB1) deubiquitinates estrogen receptor (ER) alpha and affects ERalpha transcriptional activity.</title>
        <authorList>
            <person name="Stanisic V."/>
            <person name="Malovannaya A."/>
            <person name="Qin J."/>
            <person name="Lonard D.M."/>
            <person name="O'Malley B.W."/>
        </authorList>
    </citation>
    <scope>FUNCTION</scope>
    <scope>MUTAGENESIS OF CYS-91</scope>
</reference>
<reference key="11">
    <citation type="journal article" date="2009" name="J. Mol. Biol.">
        <title>Evidence for bidentate substrate binding as the basis for the K48 linkage specificity of otubain 1.</title>
        <authorList>
            <person name="Wang T."/>
            <person name="Yin L."/>
            <person name="Cooper E.M."/>
            <person name="Lai M.-Y."/>
            <person name="Dickey S."/>
            <person name="Pickart C.M."/>
            <person name="Fushman D."/>
            <person name="Wilkinson K.D."/>
            <person name="Cohen R.E."/>
            <person name="Wolberger C."/>
        </authorList>
    </citation>
    <scope>FUNCTION</scope>
    <scope>UBIQUITIN-BINDING</scope>
    <scope>DOMAIN</scope>
    <scope>MUTAGENESIS OF CYS-23; CYS-91 AND CYS-212</scope>
</reference>
<reference key="12">
    <citation type="journal article" date="2010" name="Nature">
        <title>Non-canonical inhibition of DNA damage-dependent ubiquitination by OTUB1.</title>
        <authorList>
            <person name="Nakada S."/>
            <person name="Tai I."/>
            <person name="Panier S."/>
            <person name="Al-Hakim A."/>
            <person name="Iemura S."/>
            <person name="Juang Y.C."/>
            <person name="O'Donnell L."/>
            <person name="Kumakubo A."/>
            <person name="Munro M."/>
            <person name="Sicheri F."/>
            <person name="Gingras A.C."/>
            <person name="Natsume T."/>
            <person name="Suda T."/>
            <person name="Durocher D."/>
        </authorList>
    </citation>
    <scope>FUNCTION IN INHIBITION OF RNF168</scope>
    <scope>INTERACTION WITH UBE2N/UBC13</scope>
    <scope>MUTAGENESIS OF ASP-88; CYS-91 AND HIS-265</scope>
</reference>
<reference key="13">
    <citation type="journal article" date="2011" name="BMC Syst. Biol.">
        <title>Initial characterization of the human central proteome.</title>
        <authorList>
            <person name="Burkard T.R."/>
            <person name="Planyavsky M."/>
            <person name="Kaupe I."/>
            <person name="Breitwieser F.P."/>
            <person name="Buerckstuemmer T."/>
            <person name="Bennett K.L."/>
            <person name="Superti-Furga G."/>
            <person name="Colinge J."/>
        </authorList>
    </citation>
    <scope>IDENTIFICATION BY MASS SPECTROMETRY [LARGE SCALE ANALYSIS]</scope>
</reference>
<reference key="14">
    <citation type="journal article" date="2012" name="Proc. Natl. Acad. Sci. U.S.A.">
        <title>N-terminal acetylome analyses and functional insights of the N-terminal acetyltransferase NatB.</title>
        <authorList>
            <person name="Van Damme P."/>
            <person name="Lasa M."/>
            <person name="Polevoda B."/>
            <person name="Gazquez C."/>
            <person name="Elosegui-Artola A."/>
            <person name="Kim D.S."/>
            <person name="De Juan-Pardo E."/>
            <person name="Demeyer K."/>
            <person name="Hole K."/>
            <person name="Larrea E."/>
            <person name="Timmerman E."/>
            <person name="Prieto J."/>
            <person name="Arnesen T."/>
            <person name="Sherman F."/>
            <person name="Gevaert K."/>
            <person name="Aldabe R."/>
        </authorList>
    </citation>
    <scope>ACETYLATION [LARGE SCALE ANALYSIS] AT ALA-2</scope>
    <scope>CLEAVAGE OF INITIATOR METHIONINE [LARGE SCALE ANALYSIS]</scope>
    <scope>IDENTIFICATION BY MASS SPECTROMETRY [LARGE SCALE ANALYSIS]</scope>
</reference>
<reference key="15">
    <citation type="journal article" date="2013" name="Cell">
        <title>OTU deubiquitinases reveal mechanisms of linkage specificity and enable ubiquitin chain restriction analysis.</title>
        <authorList>
            <person name="Mevissen T.E."/>
            <person name="Hospenthal M.K."/>
            <person name="Geurink P.P."/>
            <person name="Elliott P.R."/>
            <person name="Akutsu M."/>
            <person name="Arnaudo N."/>
            <person name="Ekkebus R."/>
            <person name="Kulathu Y."/>
            <person name="Wauer T."/>
            <person name="El Oualid F."/>
            <person name="Freund S.M."/>
            <person name="Ovaa H."/>
            <person name="Komander D."/>
        </authorList>
    </citation>
    <scope>FUNCTION</scope>
    <scope>CATALYTIC ACTIVITY</scope>
</reference>
<reference key="16">
    <citation type="journal article" date="2014" name="J. Proteomics">
        <title>An enzyme assisted RP-RPLC approach for in-depth analysis of human liver phosphoproteome.</title>
        <authorList>
            <person name="Bian Y."/>
            <person name="Song C."/>
            <person name="Cheng K."/>
            <person name="Dong M."/>
            <person name="Wang F."/>
            <person name="Huang J."/>
            <person name="Sun D."/>
            <person name="Wang L."/>
            <person name="Ye M."/>
            <person name="Zou H."/>
        </authorList>
    </citation>
    <scope>IDENTIFICATION BY MASS SPECTROMETRY [LARGE SCALE ANALYSIS]</scope>
    <source>
        <tissue>Liver</tissue>
    </source>
</reference>
<reference key="17">
    <citation type="journal article" date="2018" name="J. Biol. Chem.">
        <title>OTUB1 protein suppresses mTOR complex 1 (mTORC1) activity by deubiquitinating the mTORC1 inhibitor DEPTOR.</title>
        <authorList>
            <person name="Zhao L."/>
            <person name="Wang X."/>
            <person name="Yu Y."/>
            <person name="Deng L."/>
            <person name="Chen L."/>
            <person name="Peng X."/>
            <person name="Jiao C."/>
            <person name="Gao G."/>
            <person name="Tan X."/>
            <person name="Pan W."/>
            <person name="Ge X."/>
            <person name="Wang P."/>
        </authorList>
    </citation>
    <scope>FUNCTION</scope>
    <scope>MUTAGENESIS OF CYS-23; ASP-88 AND CYS-91</scope>
</reference>
<reference key="18">
    <citation type="journal article" date="2023" name="Cell Death Differ.">
        <title>Phosphorylation of OTUB1 at Tyr 26 stabilizes the mTORC1 component, Raptor.</title>
        <authorList>
            <person name="Seo S.U."/>
            <person name="Woo S.M."/>
            <person name="Kim M.W."/>
            <person name="Lee E.W."/>
            <person name="Min K.J."/>
            <person name="Kwon T.K."/>
        </authorList>
    </citation>
    <scope>FUNCTION</scope>
    <scope>INTERACTION WITH UBE2D1; UBE2W AND UBE2N</scope>
    <scope>PHOSPHORYLATION AT TYR-26</scope>
    <scope>MUTAGENESIS OF TYR-26; ASP-88; CYS-91 AND HIS-265</scope>
</reference>
<reference key="19">
    <citation type="journal article" date="2009" name="Biochem. J.">
        <title>Structural basis and specificity of human otubain 1-mediated deubiquitination.</title>
        <authorList>
            <person name="Edelmann M.J."/>
            <person name="Iphoefer A."/>
            <person name="Akutsu M."/>
            <person name="Altun M."/>
            <person name="di Gleria K."/>
            <person name="Kramer H.B."/>
            <person name="Fiebiger E."/>
            <person name="Dhe-Paganon S."/>
            <person name="Kessler B.M."/>
        </authorList>
    </citation>
    <scope>X-RAY CRYSTALLOGRAPHY (1.69 ANGSTROMS) OF 40-271</scope>
    <scope>FUNCTION</scope>
    <scope>INTERACTION WITH FUS AND RACK1</scope>
    <scope>MUTAGENESIS OF PRO-87 AND CYS-91</scope>
    <scope>ACTIVE SITE</scope>
</reference>
<reference key="20">
    <citation type="journal article" date="2012" name="Mol. Cell">
        <title>OTUB1 co-opts Lys48-linked ubiquitin recognition to suppress E2 enzyme function.</title>
        <authorList>
            <person name="Juang Y.C."/>
            <person name="Landry M.C."/>
            <person name="Sanches M."/>
            <person name="Vittal V."/>
            <person name="Leung C.C."/>
            <person name="Ceccarelli D.F."/>
            <person name="Mateo A.R."/>
            <person name="Pruneda J.N."/>
            <person name="Mao D.Y."/>
            <person name="Szilard R.K."/>
            <person name="Orlicky S."/>
            <person name="Munro M."/>
            <person name="Brzovic P.S."/>
            <person name="Klevit R.E."/>
            <person name="Sicheri F."/>
            <person name="Durocher D."/>
        </authorList>
    </citation>
    <scope>X-RAY CRYSTALLOGRAPHY (3.3 ANGSTROMS) OF 25-271 IN COMPLEX WITH UBE2V2 AND UBE2N</scope>
    <scope>FREE UBIQUITIN-BINDING</scope>
    <scope>ACTIVITY REGULATION</scope>
    <scope>MUTAGENESIS OF GLN-33; ILE-37; GLN-39; CYS-91; ALA-116; THR-134; ASP-137; PHE-190; TYR-261 AND PRO-263</scope>
</reference>
<reference key="21">
    <citation type="journal article" date="2012" name="Nature">
        <title>The mechanism of OTUB1-mediated inhibition of ubiquitination.</title>
        <authorList>
            <person name="Wiener R."/>
            <person name="Zhang X."/>
            <person name="Wang T."/>
            <person name="Wolberger C."/>
        </authorList>
    </citation>
    <scope>X-RAY CRYSTALLOGRAPHY (3.11 ANGSTROMS) OF 1-45 IN COMPLEX WITH UBE2N AND UBIQUITIN</scope>
    <scope>ACTIVITY REGULATION</scope>
    <scope>FREE UBIQUITIN-BINDING</scope>
</reference>
<comment type="function">
    <text evidence="3 4 5 6 7 8 12">Hydrolase that can specifically remove 'Lys-48'-linked conjugated ubiquitin from proteins and plays an important regulatory role at the level of protein turnover by preventing degradation (PubMed:12401499, PubMed:12704427, PubMed:14661020, PubMed:23827681). Regulator of T-cell anergy, a phenomenon that occurs when T-cells are rendered unresponsive to antigen rechallenge and no longer respond to their cognate antigen (PubMed:14661020). Acts via its interaction with RNF128/GRAIL, a crucial inductor of CD4 T-cell anergy (PubMed:14661020). Isoform 1 destabilizes RNF128, leading to prevent anergy (PubMed:14661020). In contrast, isoform 2 stabilizes RNF128 and promotes anergy (PubMed:14661020). Surprisingly, it regulates RNF128-mediated ubiquitination, but does not deubiquitinate polyubiquitinated RNF128 (PubMed:14661020). Deubiquitinates estrogen receptor alpha (ESR1) (PubMed:19383985). Mediates deubiquitination of 'Lys-48'-linked polyubiquitin chains, but not 'Lys-63'-linked polyubiquitin chains (PubMed:18954305, PubMed:19211026, PubMed:23827681). Not able to cleave di-ubiquitin (PubMed:18954305, PubMed:23827681). Also capable of removing NEDD8 from NEDD8 conjugates, but with a much lower preference compared to 'Lys-48'-linked ubiquitin (PubMed:18954305, PubMed:23827681).</text>
</comment>
<comment type="function">
    <text evidence="9 10 13 14">Plays a key non-catalytic role in DNA repair regulation by inhibiting activity of RNF168, an E3 ubiquitin-protein ligase that promotes accumulation of 'Lys-63'-linked histone H2A and H2AX at DNA damage sites (PubMed:20725033, PubMed:22325355). Inhibits RNF168 independently of ubiquitin thioesterase activity by binding and inhibiting UBE2N/UBC13, the E2 partner of RNF168, thereby limiting spreading of 'Lys-63'-linked histone H2A and H2AX marks (PubMed:20725033, PubMed:22325355). Inhibition occurs by binding to free ubiquitin: free ubiquitin acts as an allosteric regulator that increases affinity for UBE2N/UBC13 and disrupts interaction with UBE2V1 (PubMed:20725033, PubMed:22325355). The OTUB1-UBE2N/UBC13-free ubiquitin complex adopts a configuration that mimics a cleaved 'Lys48'-linked di-ubiquitin chain (PubMed:20725033, PubMed:22325355). Acts as a regulator of mTORC1 and mTORC2 complexes (PubMed:29382726, PubMed:35927303). When phosphorylated at Tyr-26, acts as an activator of the mTORC1 complex by mediating deubiquitination of RPTOR via a non-catalytic process: acts by binding and inhibiting the activity of the ubiquitin-conjugating enzyme E2 (UBE2D1/UBCH5A, UBE2W/UBC16 and UBE2N/UBC13), thereby preventing ubiquitination of RPTOR (PubMed:35927303). Can also act as an inhibitor of the mTORC1 and mTORC2 complexes in response to amino acids by mediating non-catalytic deubiquitination of DEPTOR (PubMed:29382726).</text>
</comment>
<comment type="catalytic activity">
    <reaction evidence="12">
        <text>Thiol-dependent hydrolysis of ester, thioester, amide, peptide and isopeptide bonds formed by the C-terminal Gly of ubiquitin (a 76-residue protein attached to proteins as an intracellular targeting signal).</text>
        <dbReference type="EC" id="3.4.19.12"/>
    </reaction>
</comment>
<comment type="activity regulation">
    <text evidence="10 11">By free ubiquitin: binding of free ubiquitin triggers conformational changes in the OTU domain and formation of a ubiquitin-binding helix in the N-terminus, promoting binding of the conjugated donor ubiquitin in UBE2N/UBC13 to OTUB1.</text>
</comment>
<comment type="subunit">
    <text evidence="6 9 10 11 14">Interacts with FUS and RACK1 (PubMed:18954305). Interacts with UBE2D1/UBCH5A, UBE2W/UBC16 and UBE2N/UBC13 (PubMed:20725033, PubMed:22325355, PubMed:22367539, PubMed:35927303).</text>
</comment>
<comment type="subunit">
    <molecule>Isoform 1</molecule>
    <text evidence="5">Interacts with RNF128 (PubMed:14661020). Forms a ternary complex with RNF128 and USP8 (PubMed:14661020). Interacts with the C-terminal UCH catalytic domain of USP8 (PubMed:14661020).</text>
</comment>
<comment type="subunit">
    <molecule>Isoform 2</molecule>
    <text evidence="5">Interacts with RNF128 (PubMed:14661020). Does not associate with USP8 (PubMed:14661020).</text>
</comment>
<comment type="interaction">
    <interactant intactId="EBI-1058491">
        <id>Q96FW1</id>
    </interactant>
    <interactant intactId="EBI-640741">
        <id>P01023</id>
        <label>A2M</label>
    </interactant>
    <organismsDiffer>false</organismsDiffer>
    <experiments>3</experiments>
</comment>
<comment type="interaction">
    <interactant intactId="EBI-1058491">
        <id>Q96FW1</id>
    </interactant>
    <interactant intactId="EBI-77613">
        <id>P05067</id>
        <label>APP</label>
    </interactant>
    <organismsDiffer>false</organismsDiffer>
    <experiments>3</experiments>
</comment>
<comment type="interaction">
    <interactant intactId="EBI-1058491">
        <id>Q96FW1</id>
    </interactant>
    <interactant intactId="EBI-930964">
        <id>P54253</id>
        <label>ATXN1</label>
    </interactant>
    <organismsDiffer>false</organismsDiffer>
    <experiments>6</experiments>
</comment>
<comment type="interaction">
    <interactant intactId="EBI-1058491">
        <id>Q96FW1</id>
    </interactant>
    <interactant intactId="EBI-10988864">
        <id>P46379-2</id>
        <label>BAG6</label>
    </interactant>
    <organismsDiffer>false</organismsDiffer>
    <experiments>3</experiments>
</comment>
<comment type="interaction">
    <interactant intactId="EBI-1058491">
        <id>Q96FW1</id>
    </interactant>
    <interactant intactId="EBI-514538">
        <id>Q13490</id>
        <label>BIRC2</label>
    </interactant>
    <organismsDiffer>false</organismsDiffer>
    <experiments>3</experiments>
</comment>
<comment type="interaction">
    <interactant intactId="EBI-1058491">
        <id>Q96FW1</id>
    </interactant>
    <interactant intactId="EBI-2837444">
        <id>Q8WUW1</id>
        <label>BRK1</label>
    </interactant>
    <organismsDiffer>false</organismsDiffer>
    <experiments>3</experiments>
</comment>
<comment type="interaction">
    <interactant intactId="EBI-1058491">
        <id>Q96FW1</id>
    </interactant>
    <interactant intactId="EBI-25840379">
        <id>Q14203-5</id>
        <label>DCTN1</label>
    </interactant>
    <organismsDiffer>false</organismsDiffer>
    <experiments>3</experiments>
</comment>
<comment type="interaction">
    <interactant intactId="EBI-1058491">
        <id>Q96FW1</id>
    </interactant>
    <interactant intactId="EBI-10976677">
        <id>G5E9A7</id>
        <label>DMWD</label>
    </interactant>
    <organismsDiffer>false</organismsDiffer>
    <experiments>3</experiments>
</comment>
<comment type="interaction">
    <interactant intactId="EBI-1058491">
        <id>Q96FW1</id>
    </interactant>
    <interactant intactId="EBI-12593112">
        <id>O75190-2</id>
        <label>DNAJB6</label>
    </interactant>
    <organismsDiffer>false</organismsDiffer>
    <experiments>3</experiments>
</comment>
<comment type="interaction">
    <interactant intactId="EBI-1058491">
        <id>Q96FW1</id>
    </interactant>
    <interactant intactId="EBI-395638">
        <id>O14645</id>
        <label>DNALI1</label>
    </interactant>
    <organismsDiffer>false</organismsDiffer>
    <experiments>3</experiments>
</comment>
<comment type="interaction">
    <interactant intactId="EBI-1058491">
        <id>Q96FW1</id>
    </interactant>
    <interactant intactId="EBI-10968534">
        <id>P50570-2</id>
        <label>DNM2</label>
    </interactant>
    <organismsDiffer>false</organismsDiffer>
    <experiments>3</experiments>
</comment>
<comment type="interaction">
    <interactant intactId="EBI-1058491">
        <id>Q96FW1</id>
    </interactant>
    <interactant intactId="EBI-400434">
        <id>P35637</id>
        <label>FUS</label>
    </interactant>
    <organismsDiffer>false</organismsDiffer>
    <experiments>3</experiments>
</comment>
<comment type="interaction">
    <interactant intactId="EBI-1058491">
        <id>Q96FW1</id>
    </interactant>
    <interactant intactId="EBI-744302">
        <id>P14136</id>
        <label>GFAP</label>
    </interactant>
    <organismsDiffer>false</organismsDiffer>
    <experiments>3</experiments>
</comment>
<comment type="interaction">
    <interactant intactId="EBI-1058491">
        <id>Q96FW1</id>
    </interactant>
    <interactant intactId="EBI-1955541">
        <id>Q53GS7</id>
        <label>GLE1</label>
    </interactant>
    <organismsDiffer>false</organismsDiffer>
    <experiments>3</experiments>
</comment>
<comment type="interaction">
    <interactant intactId="EBI-1058491">
        <id>Q96FW1</id>
    </interactant>
    <interactant intactId="EBI-747754">
        <id>P28799</id>
        <label>GRN</label>
    </interactant>
    <organismsDiffer>false</organismsDiffer>
    <experiments>3</experiments>
</comment>
<comment type="interaction">
    <interactant intactId="EBI-1058491">
        <id>Q96FW1</id>
    </interactant>
    <interactant intactId="EBI-7133736">
        <id>P07686</id>
        <label>HEXB</label>
    </interactant>
    <organismsDiffer>false</organismsDiffer>
    <experiments>3</experiments>
</comment>
<comment type="interaction">
    <interactant intactId="EBI-1058491">
        <id>Q96FW1</id>
    </interactant>
    <interactant intactId="EBI-745632">
        <id>Q9NWT6</id>
        <label>HIF1AN</label>
    </interactant>
    <organismsDiffer>false</organismsDiffer>
    <experiments>7</experiments>
</comment>
<comment type="interaction">
    <interactant intactId="EBI-1058491">
        <id>Q96FW1</id>
    </interactant>
    <interactant intactId="EBI-352682">
        <id>P04792</id>
        <label>HSPB1</label>
    </interactant>
    <organismsDiffer>false</organismsDiffer>
    <experiments>3</experiments>
</comment>
<comment type="interaction">
    <interactant intactId="EBI-1058491">
        <id>Q96FW1</id>
    </interactant>
    <interactant intactId="EBI-517086">
        <id>O43464</id>
        <label>HTRA2</label>
    </interactant>
    <organismsDiffer>false</organismsDiffer>
    <experiments>3</experiments>
</comment>
<comment type="interaction">
    <interactant intactId="EBI-1058491">
        <id>Q96FW1</id>
    </interactant>
    <interactant intactId="EBI-6398041">
        <id>Q9UMF0</id>
        <label>ICAM5</label>
    </interactant>
    <organismsDiffer>false</organismsDiffer>
    <experiments>3</experiments>
</comment>
<comment type="interaction">
    <interactant intactId="EBI-1058491">
        <id>Q96FW1</id>
    </interactant>
    <interactant intactId="EBI-1055254">
        <id>Q8WXH2</id>
        <label>JPH3</label>
    </interactant>
    <organismsDiffer>false</organismsDiffer>
    <experiments>3</experiments>
</comment>
<comment type="interaction">
    <interactant intactId="EBI-1058491">
        <id>Q96FW1</id>
    </interactant>
    <interactant intactId="EBI-10975473">
        <id>O60333-2</id>
        <label>KIF1B</label>
    </interactant>
    <organismsDiffer>false</organismsDiffer>
    <experiments>3</experiments>
</comment>
<comment type="interaction">
    <interactant intactId="EBI-1058491">
        <id>Q96FW1</id>
    </interactant>
    <interactant intactId="EBI-948266">
        <id>O14901</id>
        <label>KLF11</label>
    </interactant>
    <organismsDiffer>false</organismsDiffer>
    <experiments>3</experiments>
</comment>
<comment type="interaction">
    <interactant intactId="EBI-1058491">
        <id>Q96FW1</id>
    </interactant>
    <interactant intactId="EBI-389668">
        <id>Q00987</id>
        <label>MDM2</label>
    </interactant>
    <organismsDiffer>false</organismsDiffer>
    <experiments>5</experiments>
</comment>
<comment type="interaction">
    <interactant intactId="EBI-1058491">
        <id>Q96FW1</id>
    </interactant>
    <interactant intactId="EBI-1189067">
        <id>P51608</id>
        <label>MECP2</label>
    </interactant>
    <organismsDiffer>false</organismsDiffer>
    <experiments>3</experiments>
</comment>
<comment type="interaction">
    <interactant intactId="EBI-1058491">
        <id>Q96FW1</id>
    </interactant>
    <interactant intactId="EBI-713665">
        <id>P19404</id>
        <label>NDUFV2</label>
    </interactant>
    <organismsDiffer>false</organismsDiffer>
    <experiments>3</experiments>
</comment>
<comment type="interaction">
    <interactant intactId="EBI-1058491">
        <id>Q96FW1</id>
    </interactant>
    <interactant intactId="EBI-1014514">
        <id>P35240-4</id>
        <label>NF2</label>
    </interactant>
    <organismsDiffer>false</organismsDiffer>
    <experiments>3</experiments>
</comment>
<comment type="interaction">
    <interactant intactId="EBI-1058491">
        <id>Q96FW1</id>
    </interactant>
    <interactant intactId="EBI-2510892">
        <id>Q8N6M0</id>
        <label>OTUD6B</label>
    </interactant>
    <organismsDiffer>false</organismsDiffer>
    <experiments>2</experiments>
</comment>
<comment type="interaction">
    <interactant intactId="EBI-1058491">
        <id>Q96FW1</id>
    </interactant>
    <interactant intactId="EBI-1164361">
        <id>Q99497</id>
        <label>PARK7</label>
    </interactant>
    <organismsDiffer>false</organismsDiffer>
    <experiments>4</experiments>
</comment>
<comment type="interaction">
    <interactant intactId="EBI-1058491">
        <id>Q96FW1</id>
    </interactant>
    <interactant intactId="EBI-21251460">
        <id>O60260-5</id>
        <label>PRKN</label>
    </interactant>
    <organismsDiffer>false</organismsDiffer>
    <experiments>3</experiments>
</comment>
<comment type="interaction">
    <interactant intactId="EBI-1058491">
        <id>Q96FW1</id>
    </interactant>
    <interactant intactId="EBI-749195">
        <id>P60891</id>
        <label>PRPS1</label>
    </interactant>
    <organismsDiffer>false</organismsDiffer>
    <experiments>3</experiments>
</comment>
<comment type="interaction">
    <interactant intactId="EBI-1058491">
        <id>Q96FW1</id>
    </interactant>
    <interactant intactId="EBI-11047108">
        <id>P49768-2</id>
        <label>PSEN1</label>
    </interactant>
    <organismsDiffer>false</organismsDiffer>
    <experiments>3</experiments>
</comment>
<comment type="interaction">
    <interactant intactId="EBI-1058491">
        <id>Q96FW1</id>
    </interactant>
    <interactant intactId="EBI-396669">
        <id>Q9Y3C5</id>
        <label>RNF11</label>
    </interactant>
    <organismsDiffer>false</organismsDiffer>
    <experiments>3</experiments>
</comment>
<comment type="interaction">
    <interactant intactId="EBI-1058491">
        <id>Q96FW1</id>
    </interactant>
    <interactant intactId="EBI-985879">
        <id>P37840</id>
        <label>SNCA</label>
    </interactant>
    <organismsDiffer>false</organismsDiffer>
    <experiments>3</experiments>
</comment>
<comment type="interaction">
    <interactant intactId="EBI-1058491">
        <id>Q96FW1</id>
    </interactant>
    <interactant intactId="EBI-990792">
        <id>P00441</id>
        <label>SOD1</label>
    </interactant>
    <organismsDiffer>false</organismsDiffer>
    <experiments>3</experiments>
</comment>
<comment type="interaction">
    <interactant intactId="EBI-1058491">
        <id>Q96FW1</id>
    </interactant>
    <interactant intactId="EBI-5235340">
        <id>Q7Z699</id>
        <label>SPRED1</label>
    </interactant>
    <organismsDiffer>false</organismsDiffer>
    <experiments>3</experiments>
</comment>
<comment type="interaction">
    <interactant intactId="EBI-1058491">
        <id>Q96FW1</id>
    </interactant>
    <interactant intactId="EBI-372899">
        <id>Q13148</id>
        <label>TARDBP</label>
    </interactant>
    <organismsDiffer>false</organismsDiffer>
    <experiments>8</experiments>
</comment>
<comment type="interaction">
    <interactant intactId="EBI-1058491">
        <id>Q96FW1</id>
    </interactant>
    <interactant intactId="EBI-366083">
        <id>P04637</id>
        <label>TP53</label>
    </interactant>
    <organismsDiffer>false</organismsDiffer>
    <experiments>8</experiments>
</comment>
<comment type="interaction">
    <interactant intactId="EBI-1058491">
        <id>Q96FW1</id>
    </interactant>
    <interactant intactId="EBI-2800203">
        <id>O14773</id>
        <label>TPP1</label>
    </interactant>
    <organismsDiffer>false</organismsDiffer>
    <experiments>3</experiments>
</comment>
<comment type="interaction">
    <interactant intactId="EBI-1058491">
        <id>Q96FW1</id>
    </interactant>
    <interactant intactId="EBI-12806590">
        <id>Q86WV8</id>
        <label>TSC1</label>
    </interactant>
    <organismsDiffer>false</organismsDiffer>
    <experiments>3</experiments>
</comment>
<comment type="interaction">
    <interactant intactId="EBI-1058491">
        <id>Q96FW1</id>
    </interactant>
    <interactant intactId="EBI-711909">
        <id>P02766</id>
        <label>TTR</label>
    </interactant>
    <organismsDiffer>false</organismsDiffer>
    <experiments>4</experiments>
</comment>
<comment type="interaction">
    <interactant intactId="EBI-1058491">
        <id>Q96FW1</id>
    </interactant>
    <interactant intactId="EBI-709688">
        <id>P22314</id>
        <label>UBA1</label>
    </interactant>
    <organismsDiffer>false</organismsDiffer>
    <experiments>4</experiments>
</comment>
<comment type="interaction">
    <interactant intactId="EBI-1058491">
        <id>Q96FW1</id>
    </interactant>
    <interactant intactId="EBI-413034">
        <id>P0CG47</id>
        <label>UBB</label>
    </interactant>
    <organismsDiffer>false</organismsDiffer>
    <experiments>3</experiments>
</comment>
<comment type="interaction">
    <interactant intactId="EBI-1058491">
        <id>Q96FW1</id>
    </interactant>
    <interactant intactId="EBI-743540">
        <id>P51668</id>
        <label>UBE2D1</label>
    </interactant>
    <organismsDiffer>false</organismsDiffer>
    <experiments>15</experiments>
</comment>
<comment type="interaction">
    <interactant intactId="EBI-1058491">
        <id>Q96FW1</id>
    </interactant>
    <interactant intactId="EBI-347677">
        <id>P62837</id>
        <label>UBE2D2</label>
    </interactant>
    <organismsDiffer>false</organismsDiffer>
    <experiments>18</experiments>
</comment>
<comment type="interaction">
    <interactant intactId="EBI-1058491">
        <id>Q96FW1</id>
    </interactant>
    <interactant intactId="EBI-348268">
        <id>P61077</id>
        <label>UBE2D3</label>
    </interactant>
    <organismsDiffer>false</organismsDiffer>
    <experiments>14</experiments>
</comment>
<comment type="interaction">
    <interactant intactId="EBI-1058491">
        <id>Q96FW1</id>
    </interactant>
    <interactant intactId="EBI-745527">
        <id>Q9Y2X8</id>
        <label>UBE2D4</label>
    </interactant>
    <organismsDiffer>false</organismsDiffer>
    <experiments>12</experiments>
</comment>
<comment type="interaction">
    <interactant intactId="EBI-1058491">
        <id>Q96FW1</id>
    </interactant>
    <interactant intactId="EBI-348546">
        <id>P51965</id>
        <label>UBE2E1</label>
    </interactant>
    <organismsDiffer>false</organismsDiffer>
    <experiments>4</experiments>
</comment>
<comment type="interaction">
    <interactant intactId="EBI-1058491">
        <id>Q96FW1</id>
    </interactant>
    <interactant intactId="EBI-2129763">
        <id>Q96LR5</id>
        <label>UBE2E2</label>
    </interactant>
    <organismsDiffer>false</organismsDiffer>
    <experiments>10</experiments>
</comment>
<comment type="interaction">
    <interactant intactId="EBI-1058491">
        <id>Q96FW1</id>
    </interactant>
    <interactant intactId="EBI-348496">
        <id>Q969T4</id>
        <label>UBE2E3</label>
    </interactant>
    <organismsDiffer>false</organismsDiffer>
    <experiments>10</experiments>
</comment>
<comment type="interaction">
    <interactant intactId="EBI-1058491">
        <id>Q96FW1</id>
    </interactant>
    <interactant intactId="EBI-12157263">
        <id>P40337-2</id>
        <label>VHL</label>
    </interactant>
    <organismsDiffer>false</organismsDiffer>
    <experiments>3</experiments>
</comment>
<comment type="interaction">
    <interactant intactId="EBI-1058491">
        <id>Q96FW1</id>
    </interactant>
    <interactant intactId="EBI-720609">
        <id>O76024</id>
        <label>WFS1</label>
    </interactant>
    <organismsDiffer>false</organismsDiffer>
    <experiments>3</experiments>
</comment>
<comment type="interaction">
    <interactant intactId="EBI-1058491">
        <id>Q96FW1</id>
    </interactant>
    <interactant intactId="EBI-8022937">
        <id>Q56921</id>
        <label>ypkA</label>
    </interactant>
    <organismsDiffer>true</organismsDiffer>
    <experiments>5</experiments>
</comment>
<comment type="interaction">
    <interactant intactId="EBI-1058491">
        <id>Q96FW1</id>
    </interactant>
    <interactant intactId="EBI-2849107">
        <id>Q9RI12</id>
        <label>ypkA</label>
    </interactant>
    <organismsDiffer>true</organismsDiffer>
    <experiments>3</experiments>
</comment>
<comment type="interaction">
    <interactant intactId="EBI-15972141">
        <id>Q96FW1-1</id>
    </interactant>
    <interactant intactId="EBI-1052908">
        <id>P61088</id>
        <label>UBE2N</label>
    </interactant>
    <organismsDiffer>false</organismsDiffer>
    <experiments>5</experiments>
</comment>
<comment type="subcellular location">
    <subcellularLocation>
        <location evidence="1">Cytoplasm</location>
    </subcellularLocation>
</comment>
<comment type="alternative products">
    <event type="alternative splicing"/>
    <isoform>
        <id>Q96FW1-1</id>
        <name>1</name>
        <name>Otubain-1</name>
        <sequence type="displayed"/>
    </isoform>
    <isoform>
        <id>Q96FW1-2</id>
        <name>2</name>
        <name>ARF-1</name>
        <sequence type="described" ref="VSP_009464"/>
    </isoform>
</comment>
<comment type="tissue specificity">
    <text evidence="4 5">Isoform 1 is ubiquitous. Isoform 2 is expressed only in lymphoid tissues such as tonsils, lymph nodes and spleen, as well as peripheral blood mononuclear cells.</text>
</comment>
<comment type="domain">
    <text evidence="7">In addition to ubiquitin-binding at the Cys-91 active site, a proximal ubiquitin-binding site is also present at Cys-23 Occupancy of the active site is needed to enable tight binding to the second site. Distinct binding sites for the ubiquitins may allow to discriminate among different isopeptide linkages (i.e. 'Lys-48'-, 'Lys-63'-linked polyubiquitin) in polyubiquitin substrates and achieve linkage-specific deubiquitination.</text>
</comment>
<comment type="PTM">
    <text evidence="14">Phosphorylation at Tyr-26 by SRC and SRMS promotes deubiquitination of RPTOR via a non-catalytic process.</text>
</comment>
<comment type="miscellaneous">
    <text evidence="6">In the structure described by PubMed:18954305, the His-265 active site of the catalytic triad is located too far to interact directly with the active site Cys-91 (PubMed:18954305). A possible explanation is that OTUB1 is in inactive conformation in absence of ubiquitin and a conformation change may move His-265 in the proximity of Cys-91 in presence of ubiquitin substrate (PubMed:18954305).</text>
</comment>
<comment type="miscellaneous">
    <molecule>Isoform 2</molecule>
    <text evidence="16">Lacks the catalytic sites for protease activity.</text>
</comment>
<comment type="similarity">
    <text evidence="16">Belongs to the peptidase C65 family.</text>
</comment>
<comment type="sequence caution" evidence="16">
    <conflict type="erroneous initiation">
        <sequence resource="EMBL-CDS" id="AAF28941"/>
    </conflict>
</comment>
<name>OTUB1_HUMAN</name>
<organism>
    <name type="scientific">Homo sapiens</name>
    <name type="common">Human</name>
    <dbReference type="NCBI Taxonomy" id="9606"/>
    <lineage>
        <taxon>Eukaryota</taxon>
        <taxon>Metazoa</taxon>
        <taxon>Chordata</taxon>
        <taxon>Craniata</taxon>
        <taxon>Vertebrata</taxon>
        <taxon>Euteleostomi</taxon>
        <taxon>Mammalia</taxon>
        <taxon>Eutheria</taxon>
        <taxon>Euarchontoglires</taxon>
        <taxon>Primates</taxon>
        <taxon>Haplorrhini</taxon>
        <taxon>Catarrhini</taxon>
        <taxon>Hominidae</taxon>
        <taxon>Homo</taxon>
    </lineage>
</organism>
<keyword id="KW-0002">3D-structure</keyword>
<keyword id="KW-0007">Acetylation</keyword>
<keyword id="KW-1064">Adaptive immunity</keyword>
<keyword id="KW-0025">Alternative splicing</keyword>
<keyword id="KW-0963">Cytoplasm</keyword>
<keyword id="KW-0903">Direct protein sequencing</keyword>
<keyword id="KW-0227">DNA damage</keyword>
<keyword id="KW-0234">DNA repair</keyword>
<keyword id="KW-0378">Hydrolase</keyword>
<keyword id="KW-0391">Immunity</keyword>
<keyword id="KW-0597">Phosphoprotein</keyword>
<keyword id="KW-0645">Protease</keyword>
<keyword id="KW-1267">Proteomics identification</keyword>
<keyword id="KW-1185">Reference proteome</keyword>
<keyword id="KW-0788">Thiol protease</keyword>
<keyword id="KW-0833">Ubl conjugation pathway</keyword>
<gene>
    <name type="primary">OTUB1</name>
    <name type="synonym">OTB1</name>
    <name type="synonym">OTU1</name>
    <name type="ORF">HSPC263</name>
</gene>
<evidence type="ECO:0000250" key="1">
    <source>
        <dbReference type="UniProtKB" id="B2RYG6"/>
    </source>
</evidence>
<evidence type="ECO:0000255" key="2">
    <source>
        <dbReference type="PROSITE-ProRule" id="PRU00139"/>
    </source>
</evidence>
<evidence type="ECO:0000269" key="3">
    <source>
    </source>
</evidence>
<evidence type="ECO:0000269" key="4">
    <source>
    </source>
</evidence>
<evidence type="ECO:0000269" key="5">
    <source>
    </source>
</evidence>
<evidence type="ECO:0000269" key="6">
    <source>
    </source>
</evidence>
<evidence type="ECO:0000269" key="7">
    <source>
    </source>
</evidence>
<evidence type="ECO:0000269" key="8">
    <source>
    </source>
</evidence>
<evidence type="ECO:0000269" key="9">
    <source>
    </source>
</evidence>
<evidence type="ECO:0000269" key="10">
    <source>
    </source>
</evidence>
<evidence type="ECO:0000269" key="11">
    <source>
    </source>
</evidence>
<evidence type="ECO:0000269" key="12">
    <source>
    </source>
</evidence>
<evidence type="ECO:0000269" key="13">
    <source>
    </source>
</evidence>
<evidence type="ECO:0000269" key="14">
    <source>
    </source>
</evidence>
<evidence type="ECO:0000303" key="15">
    <source>
    </source>
</evidence>
<evidence type="ECO:0000305" key="16"/>
<evidence type="ECO:0000305" key="17">
    <source>
    </source>
</evidence>
<evidence type="ECO:0007744" key="18">
    <source>
        <dbReference type="PDB" id="4DHZ"/>
    </source>
</evidence>
<evidence type="ECO:0007744" key="19">
    <source>
    </source>
</evidence>
<evidence type="ECO:0007744" key="20">
    <source>
    </source>
</evidence>
<evidence type="ECO:0007744" key="21">
    <source>
    </source>
</evidence>
<evidence type="ECO:0007829" key="22">
    <source>
        <dbReference type="PDB" id="2ZFY"/>
    </source>
</evidence>
<evidence type="ECO:0007829" key="23">
    <source>
        <dbReference type="PDB" id="4DDG"/>
    </source>
</evidence>
<evidence type="ECO:0007829" key="24">
    <source>
        <dbReference type="PDB" id="4I6L"/>
    </source>
</evidence>
<evidence type="ECO:0007829" key="25">
    <source>
        <dbReference type="PDB" id="4LDT"/>
    </source>
</evidence>